<evidence type="ECO:0000255" key="1">
    <source>
        <dbReference type="HAMAP-Rule" id="MF_00139"/>
    </source>
</evidence>
<evidence type="ECO:0000255" key="2">
    <source>
        <dbReference type="PROSITE-ProRule" id="PRU01202"/>
    </source>
</evidence>
<accession>B2FJP9</accession>
<gene>
    <name evidence="1" type="primary">purH</name>
    <name type="ordered locus">Smlt4253</name>
</gene>
<name>PUR9_STRMK</name>
<feature type="chain" id="PRO_1000096099" description="Bifunctional purine biosynthesis protein PurH">
    <location>
        <begin position="1"/>
        <end position="527"/>
    </location>
</feature>
<feature type="domain" description="MGS-like" evidence="2">
    <location>
        <begin position="1"/>
        <end position="149"/>
    </location>
</feature>
<dbReference type="EC" id="2.1.2.3" evidence="1"/>
<dbReference type="EC" id="3.5.4.10" evidence="1"/>
<dbReference type="EMBL" id="AM743169">
    <property type="protein sequence ID" value="CAQ47642.1"/>
    <property type="molecule type" value="Genomic_DNA"/>
</dbReference>
<dbReference type="RefSeq" id="WP_012481416.1">
    <property type="nucleotide sequence ID" value="NC_010943.1"/>
</dbReference>
<dbReference type="SMR" id="B2FJP9"/>
<dbReference type="EnsemblBacteria" id="CAQ47642">
    <property type="protein sequence ID" value="CAQ47642"/>
    <property type="gene ID" value="Smlt4253"/>
</dbReference>
<dbReference type="KEGG" id="sml:Smlt4253"/>
<dbReference type="PATRIC" id="fig|522373.3.peg.4024"/>
<dbReference type="eggNOG" id="COG0138">
    <property type="taxonomic scope" value="Bacteria"/>
</dbReference>
<dbReference type="HOGENOM" id="CLU_016316_5_2_6"/>
<dbReference type="UniPathway" id="UPA00074">
    <property type="reaction ID" value="UER00133"/>
</dbReference>
<dbReference type="UniPathway" id="UPA00074">
    <property type="reaction ID" value="UER00135"/>
</dbReference>
<dbReference type="Proteomes" id="UP000008840">
    <property type="component" value="Chromosome"/>
</dbReference>
<dbReference type="GO" id="GO:0005829">
    <property type="term" value="C:cytosol"/>
    <property type="evidence" value="ECO:0007669"/>
    <property type="project" value="TreeGrafter"/>
</dbReference>
<dbReference type="GO" id="GO:0003937">
    <property type="term" value="F:IMP cyclohydrolase activity"/>
    <property type="evidence" value="ECO:0007669"/>
    <property type="project" value="UniProtKB-UniRule"/>
</dbReference>
<dbReference type="GO" id="GO:0004643">
    <property type="term" value="F:phosphoribosylaminoimidazolecarboxamide formyltransferase activity"/>
    <property type="evidence" value="ECO:0007669"/>
    <property type="project" value="UniProtKB-UniRule"/>
</dbReference>
<dbReference type="GO" id="GO:0006189">
    <property type="term" value="P:'de novo' IMP biosynthetic process"/>
    <property type="evidence" value="ECO:0007669"/>
    <property type="project" value="UniProtKB-UniRule"/>
</dbReference>
<dbReference type="CDD" id="cd01421">
    <property type="entry name" value="IMPCH"/>
    <property type="match status" value="1"/>
</dbReference>
<dbReference type="FunFam" id="3.40.140.20:FF:000001">
    <property type="entry name" value="Bifunctional purine biosynthesis protein PurH"/>
    <property type="match status" value="1"/>
</dbReference>
<dbReference type="FunFam" id="3.40.140.20:FF:000002">
    <property type="entry name" value="Bifunctional purine biosynthesis protein PurH"/>
    <property type="match status" value="1"/>
</dbReference>
<dbReference type="FunFam" id="3.40.50.1380:FF:000001">
    <property type="entry name" value="Bifunctional purine biosynthesis protein PurH"/>
    <property type="match status" value="1"/>
</dbReference>
<dbReference type="Gene3D" id="3.40.140.20">
    <property type="match status" value="2"/>
</dbReference>
<dbReference type="Gene3D" id="3.40.50.1380">
    <property type="entry name" value="Methylglyoxal synthase-like domain"/>
    <property type="match status" value="1"/>
</dbReference>
<dbReference type="HAMAP" id="MF_00139">
    <property type="entry name" value="PurH"/>
    <property type="match status" value="1"/>
</dbReference>
<dbReference type="InterPro" id="IPR024051">
    <property type="entry name" value="AICAR_Tfase_dup_dom_sf"/>
</dbReference>
<dbReference type="InterPro" id="IPR016193">
    <property type="entry name" value="Cytidine_deaminase-like"/>
</dbReference>
<dbReference type="InterPro" id="IPR011607">
    <property type="entry name" value="MGS-like_dom"/>
</dbReference>
<dbReference type="InterPro" id="IPR036914">
    <property type="entry name" value="MGS-like_dom_sf"/>
</dbReference>
<dbReference type="InterPro" id="IPR002695">
    <property type="entry name" value="PurH-like"/>
</dbReference>
<dbReference type="NCBIfam" id="NF002049">
    <property type="entry name" value="PRK00881.1"/>
    <property type="match status" value="1"/>
</dbReference>
<dbReference type="NCBIfam" id="TIGR00355">
    <property type="entry name" value="purH"/>
    <property type="match status" value="1"/>
</dbReference>
<dbReference type="PANTHER" id="PTHR11692:SF0">
    <property type="entry name" value="BIFUNCTIONAL PURINE BIOSYNTHESIS PROTEIN ATIC"/>
    <property type="match status" value="1"/>
</dbReference>
<dbReference type="PANTHER" id="PTHR11692">
    <property type="entry name" value="BIFUNCTIONAL PURINE BIOSYNTHESIS PROTEIN PURH"/>
    <property type="match status" value="1"/>
</dbReference>
<dbReference type="Pfam" id="PF01808">
    <property type="entry name" value="AICARFT_IMPCHas"/>
    <property type="match status" value="1"/>
</dbReference>
<dbReference type="Pfam" id="PF02142">
    <property type="entry name" value="MGS"/>
    <property type="match status" value="1"/>
</dbReference>
<dbReference type="PIRSF" id="PIRSF000414">
    <property type="entry name" value="AICARFT_IMPCHas"/>
    <property type="match status" value="1"/>
</dbReference>
<dbReference type="SMART" id="SM00798">
    <property type="entry name" value="AICARFT_IMPCHas"/>
    <property type="match status" value="1"/>
</dbReference>
<dbReference type="SMART" id="SM00851">
    <property type="entry name" value="MGS"/>
    <property type="match status" value="1"/>
</dbReference>
<dbReference type="SUPFAM" id="SSF53927">
    <property type="entry name" value="Cytidine deaminase-like"/>
    <property type="match status" value="1"/>
</dbReference>
<dbReference type="SUPFAM" id="SSF52335">
    <property type="entry name" value="Methylglyoxal synthase-like"/>
    <property type="match status" value="1"/>
</dbReference>
<dbReference type="PROSITE" id="PS51855">
    <property type="entry name" value="MGS"/>
    <property type="match status" value="1"/>
</dbReference>
<reference key="1">
    <citation type="journal article" date="2008" name="Genome Biol.">
        <title>The complete genome, comparative and functional analysis of Stenotrophomonas maltophilia reveals an organism heavily shielded by drug resistance determinants.</title>
        <authorList>
            <person name="Crossman L.C."/>
            <person name="Gould V.C."/>
            <person name="Dow J.M."/>
            <person name="Vernikos G.S."/>
            <person name="Okazaki A."/>
            <person name="Sebaihia M."/>
            <person name="Saunders D."/>
            <person name="Arrowsmith C."/>
            <person name="Carver T."/>
            <person name="Peters N."/>
            <person name="Adlem E."/>
            <person name="Kerhornou A."/>
            <person name="Lord A."/>
            <person name="Murphy L."/>
            <person name="Seeger K."/>
            <person name="Squares R."/>
            <person name="Rutter S."/>
            <person name="Quail M.A."/>
            <person name="Rajandream M.A."/>
            <person name="Harris D."/>
            <person name="Churcher C."/>
            <person name="Bentley S.D."/>
            <person name="Parkhill J."/>
            <person name="Thomson N.R."/>
            <person name="Avison M.B."/>
        </authorList>
    </citation>
    <scope>NUCLEOTIDE SEQUENCE [LARGE SCALE GENOMIC DNA]</scope>
    <source>
        <strain>K279a</strain>
    </source>
</reference>
<keyword id="KW-0378">Hydrolase</keyword>
<keyword id="KW-0511">Multifunctional enzyme</keyword>
<keyword id="KW-0658">Purine biosynthesis</keyword>
<keyword id="KW-1185">Reference proteome</keyword>
<keyword id="KW-0808">Transferase</keyword>
<sequence>MTADLLPVRRALLSVSDKTGLVELATALAARGVELLSTGGTAKAIRDAGLAVKDVADVTGFPEMMDGRVKTLHPMVHGGLLGRSGLDDAVMAEHGIGAIDLLVLNLYPFESVTAKADCTLADAVENIDIGGPAMLRSAAKNFARVAVATDPSQYAELLASLDANDGQLSASTRFAFSVAAFNRVAQYDAAISNYLSAVTATDAAVPARAEYPAQMNSTFVKVMDLRYGENPHQSGAFYRDLYPVPGTLATFQQLQGKELSYNNLADADAAWECVRQFDAPACVIVKHANPCGVAVGAGNGDAYELAYATDPTSAFGGIIAFNKPLDAATAKVILDRQFVEVLIAPDYEPAALEYAQKKANVRVLRIPHGDGLNNFDSKRVGSGLLLQSSDNRGMTRDELKVVSKLAPTDKQFTDLLFAWKVAKFVKSNAIVYAKDNRTIGVGAGQMSRVYSARIAGIKAADANLVVEGSVMASDAFFPFRDGIDAAAAAGIKAVIQPGGSMRDAEVIAAADEHGLAMVFTGVRHFRH</sequence>
<proteinExistence type="inferred from homology"/>
<comment type="catalytic activity">
    <reaction evidence="1">
        <text>(6R)-10-formyltetrahydrofolate + 5-amino-1-(5-phospho-beta-D-ribosyl)imidazole-4-carboxamide = 5-formamido-1-(5-phospho-D-ribosyl)imidazole-4-carboxamide + (6S)-5,6,7,8-tetrahydrofolate</text>
        <dbReference type="Rhea" id="RHEA:22192"/>
        <dbReference type="ChEBI" id="CHEBI:57453"/>
        <dbReference type="ChEBI" id="CHEBI:58467"/>
        <dbReference type="ChEBI" id="CHEBI:58475"/>
        <dbReference type="ChEBI" id="CHEBI:195366"/>
        <dbReference type="EC" id="2.1.2.3"/>
    </reaction>
</comment>
<comment type="catalytic activity">
    <reaction evidence="1">
        <text>IMP + H2O = 5-formamido-1-(5-phospho-D-ribosyl)imidazole-4-carboxamide</text>
        <dbReference type="Rhea" id="RHEA:18445"/>
        <dbReference type="ChEBI" id="CHEBI:15377"/>
        <dbReference type="ChEBI" id="CHEBI:58053"/>
        <dbReference type="ChEBI" id="CHEBI:58467"/>
        <dbReference type="EC" id="3.5.4.10"/>
    </reaction>
</comment>
<comment type="pathway">
    <text evidence="1">Purine metabolism; IMP biosynthesis via de novo pathway; 5-formamido-1-(5-phospho-D-ribosyl)imidazole-4-carboxamide from 5-amino-1-(5-phospho-D-ribosyl)imidazole-4-carboxamide (10-formyl THF route): step 1/1.</text>
</comment>
<comment type="pathway">
    <text evidence="1">Purine metabolism; IMP biosynthesis via de novo pathway; IMP from 5-formamido-1-(5-phospho-D-ribosyl)imidazole-4-carboxamide: step 1/1.</text>
</comment>
<comment type="domain">
    <text evidence="1">The IMP cyclohydrolase activity resides in the N-terminal region.</text>
</comment>
<comment type="similarity">
    <text evidence="1">Belongs to the PurH family.</text>
</comment>
<protein>
    <recommendedName>
        <fullName evidence="1">Bifunctional purine biosynthesis protein PurH</fullName>
    </recommendedName>
    <domain>
        <recommendedName>
            <fullName evidence="1">Phosphoribosylaminoimidazolecarboxamide formyltransferase</fullName>
            <ecNumber evidence="1">2.1.2.3</ecNumber>
        </recommendedName>
        <alternativeName>
            <fullName evidence="1">AICAR transformylase</fullName>
        </alternativeName>
    </domain>
    <domain>
        <recommendedName>
            <fullName evidence="1">IMP cyclohydrolase</fullName>
            <ecNumber evidence="1">3.5.4.10</ecNumber>
        </recommendedName>
        <alternativeName>
            <fullName evidence="1">ATIC</fullName>
        </alternativeName>
        <alternativeName>
            <fullName evidence="1">IMP synthase</fullName>
        </alternativeName>
        <alternativeName>
            <fullName evidence="1">Inosinicase</fullName>
        </alternativeName>
    </domain>
</protein>
<organism>
    <name type="scientific">Stenotrophomonas maltophilia (strain K279a)</name>
    <dbReference type="NCBI Taxonomy" id="522373"/>
    <lineage>
        <taxon>Bacteria</taxon>
        <taxon>Pseudomonadati</taxon>
        <taxon>Pseudomonadota</taxon>
        <taxon>Gammaproteobacteria</taxon>
        <taxon>Lysobacterales</taxon>
        <taxon>Lysobacteraceae</taxon>
        <taxon>Stenotrophomonas</taxon>
        <taxon>Stenotrophomonas maltophilia group</taxon>
    </lineage>
</organism>